<name>RR12_COFAR</name>
<comment type="function">
    <text evidence="1">With S4 and S5 plays an important role in translational accuracy. Located at the interface of the 30S and 50S subunits (By similarity).</text>
</comment>
<comment type="subunit">
    <text evidence="1">Part of the 30S ribosomal subunit.</text>
</comment>
<comment type="subcellular location">
    <subcellularLocation>
        <location>Plastid</location>
        <location>Chloroplast</location>
    </subcellularLocation>
</comment>
<comment type="similarity">
    <text evidence="3">Belongs to the universal ribosomal protein uS12 family.</text>
</comment>
<protein>
    <recommendedName>
        <fullName evidence="2">Small ribosomal subunit protein uS12cz/uS12cy</fullName>
    </recommendedName>
    <alternativeName>
        <fullName evidence="3">30S ribosomal protein S12, chloroplastic</fullName>
    </alternativeName>
</protein>
<organism>
    <name type="scientific">Coffea arabica</name>
    <name type="common">Arabian coffee</name>
    <dbReference type="NCBI Taxonomy" id="13443"/>
    <lineage>
        <taxon>Eukaryota</taxon>
        <taxon>Viridiplantae</taxon>
        <taxon>Streptophyta</taxon>
        <taxon>Embryophyta</taxon>
        <taxon>Tracheophyta</taxon>
        <taxon>Spermatophyta</taxon>
        <taxon>Magnoliopsida</taxon>
        <taxon>eudicotyledons</taxon>
        <taxon>Gunneridae</taxon>
        <taxon>Pentapetalae</taxon>
        <taxon>asterids</taxon>
        <taxon>lamiids</taxon>
        <taxon>Gentianales</taxon>
        <taxon>Rubiaceae</taxon>
        <taxon>Ixoroideae</taxon>
        <taxon>Gardenieae complex</taxon>
        <taxon>Bertiereae - Coffeeae clade</taxon>
        <taxon>Coffeeae</taxon>
        <taxon>Coffea</taxon>
    </lineage>
</organism>
<gene>
    <name type="primary">rps12-A</name>
</gene>
<gene>
    <name type="primary">rps12-B</name>
</gene>
<keyword id="KW-0150">Chloroplast</keyword>
<keyword id="KW-0934">Plastid</keyword>
<keyword id="KW-1185">Reference proteome</keyword>
<keyword id="KW-0687">Ribonucleoprotein</keyword>
<keyword id="KW-0689">Ribosomal protein</keyword>
<keyword id="KW-0694">RNA-binding</keyword>
<keyword id="KW-0699">rRNA-binding</keyword>
<feature type="chain" id="PRO_0000276607" description="Small ribosomal subunit protein uS12cz/uS12cy">
    <location>
        <begin position="1"/>
        <end position="123"/>
    </location>
</feature>
<proteinExistence type="inferred from homology"/>
<dbReference type="EMBL" id="EF044213">
    <property type="protein sequence ID" value="ABJ89725.1"/>
    <property type="molecule type" value="Genomic_DNA"/>
</dbReference>
<dbReference type="EMBL" id="EF044213">
    <property type="protein sequence ID" value="ABJ89738.1"/>
    <property type="molecule type" value="Genomic_DNA"/>
</dbReference>
<dbReference type="SMR" id="A0A314"/>
<dbReference type="OrthoDB" id="414309at2759"/>
<dbReference type="Proteomes" id="UP000515148">
    <property type="component" value="Unplaced"/>
</dbReference>
<dbReference type="GO" id="GO:0009507">
    <property type="term" value="C:chloroplast"/>
    <property type="evidence" value="ECO:0007669"/>
    <property type="project" value="UniProtKB-SubCell"/>
</dbReference>
<dbReference type="GO" id="GO:0015935">
    <property type="term" value="C:small ribosomal subunit"/>
    <property type="evidence" value="ECO:0007669"/>
    <property type="project" value="InterPro"/>
</dbReference>
<dbReference type="GO" id="GO:0019843">
    <property type="term" value="F:rRNA binding"/>
    <property type="evidence" value="ECO:0007669"/>
    <property type="project" value="UniProtKB-UniRule"/>
</dbReference>
<dbReference type="GO" id="GO:0003735">
    <property type="term" value="F:structural constituent of ribosome"/>
    <property type="evidence" value="ECO:0007669"/>
    <property type="project" value="InterPro"/>
</dbReference>
<dbReference type="GO" id="GO:0006412">
    <property type="term" value="P:translation"/>
    <property type="evidence" value="ECO:0007669"/>
    <property type="project" value="UniProtKB-UniRule"/>
</dbReference>
<dbReference type="CDD" id="cd03368">
    <property type="entry name" value="Ribosomal_S12"/>
    <property type="match status" value="1"/>
</dbReference>
<dbReference type="FunFam" id="2.40.50.140:FF:000008">
    <property type="entry name" value="30S ribosomal protein S12, chloroplastic"/>
    <property type="match status" value="1"/>
</dbReference>
<dbReference type="Gene3D" id="2.40.50.140">
    <property type="entry name" value="Nucleic acid-binding proteins"/>
    <property type="match status" value="1"/>
</dbReference>
<dbReference type="HAMAP" id="MF_00403_B">
    <property type="entry name" value="Ribosomal_uS12_B"/>
    <property type="match status" value="1"/>
</dbReference>
<dbReference type="InterPro" id="IPR012340">
    <property type="entry name" value="NA-bd_OB-fold"/>
</dbReference>
<dbReference type="InterPro" id="IPR006032">
    <property type="entry name" value="Ribosomal_uS12"/>
</dbReference>
<dbReference type="InterPro" id="IPR005679">
    <property type="entry name" value="Ribosomal_uS12_bac"/>
</dbReference>
<dbReference type="NCBIfam" id="TIGR00981">
    <property type="entry name" value="rpsL_bact"/>
    <property type="match status" value="1"/>
</dbReference>
<dbReference type="PANTHER" id="PTHR11652">
    <property type="entry name" value="30S RIBOSOMAL PROTEIN S12 FAMILY MEMBER"/>
    <property type="match status" value="1"/>
</dbReference>
<dbReference type="Pfam" id="PF00164">
    <property type="entry name" value="Ribosom_S12_S23"/>
    <property type="match status" value="1"/>
</dbReference>
<dbReference type="PIRSF" id="PIRSF002133">
    <property type="entry name" value="Ribosomal_S12/S23"/>
    <property type="match status" value="1"/>
</dbReference>
<dbReference type="PRINTS" id="PR01034">
    <property type="entry name" value="RIBOSOMALS12"/>
</dbReference>
<dbReference type="SUPFAM" id="SSF50249">
    <property type="entry name" value="Nucleic acid-binding proteins"/>
    <property type="match status" value="1"/>
</dbReference>
<dbReference type="PROSITE" id="PS00055">
    <property type="entry name" value="RIBOSOMAL_S12"/>
    <property type="match status" value="1"/>
</dbReference>
<accession>A0A314</accession>
<geneLocation type="chloroplast"/>
<sequence>MPTIKQLIRNARQPIRNVTKSPALRGCPQRRGTCTRVYTITPKKPNSALRKVARVRLTSGFEITAYIPGIGHNLQEHSVVLVRGGRVKDLPGVRYHIVRGTLDAVGVKDRQQGRSKYGVKKPK</sequence>
<evidence type="ECO:0000250" key="1"/>
<evidence type="ECO:0000255" key="2">
    <source>
        <dbReference type="HAMAP-Rule" id="MF_00403"/>
    </source>
</evidence>
<evidence type="ECO:0000305" key="3"/>
<reference key="1">
    <citation type="journal article" date="2007" name="Plant Biotechnol. J.">
        <title>The complete nucleotide sequence of the coffee (Coffea arabica L.) chloroplast genome: organization and implications for biotechnology and phylogenetic relationships amongst angiosperms.</title>
        <authorList>
            <person name="Samson N."/>
            <person name="Bausher M.G."/>
            <person name="Lee S.-B."/>
            <person name="Jansen R.K."/>
            <person name="Daniell H."/>
        </authorList>
    </citation>
    <scope>NUCLEOTIDE SEQUENCE [LARGE SCALE GENOMIC DNA]</scope>
</reference>